<comment type="function">
    <text evidence="1">Receptor for the chemotactic and inflammatory peptide anaphylatoxin C3a. This receptor stimulates chemotaxis, granule enzyme release and superoxide anion production (By similarity).</text>
</comment>
<comment type="subunit">
    <text evidence="2">Interacts with VGF-derived peptide TLQP-21 (By similarity).</text>
</comment>
<comment type="subcellular location">
    <subcellularLocation>
        <location>Cell membrane</location>
        <topology>Multi-pass membrane protein</topology>
    </subcellularLocation>
</comment>
<comment type="PTM">
    <text evidence="1">Among the sulfation sites Tyr-174 is essential for binding of C3a anaphylatoxin.</text>
</comment>
<comment type="similarity">
    <text evidence="4">Belongs to the G-protein coupled receptor 1 family.</text>
</comment>
<organism>
    <name type="scientific">Pongo abelii</name>
    <name type="common">Sumatran orangutan</name>
    <name type="synonym">Pongo pygmaeus abelii</name>
    <dbReference type="NCBI Taxonomy" id="9601"/>
    <lineage>
        <taxon>Eukaryota</taxon>
        <taxon>Metazoa</taxon>
        <taxon>Chordata</taxon>
        <taxon>Craniata</taxon>
        <taxon>Vertebrata</taxon>
        <taxon>Euteleostomi</taxon>
        <taxon>Mammalia</taxon>
        <taxon>Eutheria</taxon>
        <taxon>Euarchontoglires</taxon>
        <taxon>Primates</taxon>
        <taxon>Haplorrhini</taxon>
        <taxon>Catarrhini</taxon>
        <taxon>Hominidae</taxon>
        <taxon>Pongo</taxon>
    </lineage>
</organism>
<proteinExistence type="evidence at transcript level"/>
<name>C3AR_PONAB</name>
<evidence type="ECO:0000250" key="1"/>
<evidence type="ECO:0000250" key="2">
    <source>
        <dbReference type="UniProtKB" id="O09047"/>
    </source>
</evidence>
<evidence type="ECO:0000255" key="3"/>
<evidence type="ECO:0000255" key="4">
    <source>
        <dbReference type="PROSITE-ProRule" id="PRU00521"/>
    </source>
</evidence>
<reference key="1">
    <citation type="submission" date="2004-11" db="EMBL/GenBank/DDBJ databases">
        <authorList>
            <consortium name="The German cDNA consortium"/>
        </authorList>
    </citation>
    <scope>NUCLEOTIDE SEQUENCE [LARGE SCALE MRNA]</scope>
    <source>
        <tissue>Kidney</tissue>
    </source>
</reference>
<protein>
    <recommendedName>
        <fullName>C3a anaphylatoxin chemotactic receptor</fullName>
        <shortName>C3AR</shortName>
        <shortName>C3a-R</shortName>
    </recommendedName>
</protein>
<accession>Q5REI5</accession>
<feature type="chain" id="PRO_0000269719" description="C3a anaphylatoxin chemotactic receptor">
    <location>
        <begin position="1"/>
        <end position="482"/>
    </location>
</feature>
<feature type="topological domain" description="Extracellular" evidence="3">
    <location>
        <begin position="1"/>
        <end position="23"/>
    </location>
</feature>
<feature type="transmembrane region" description="Helical; Name=1" evidence="3">
    <location>
        <begin position="24"/>
        <end position="46"/>
    </location>
</feature>
<feature type="topological domain" description="Cytoplasmic" evidence="3">
    <location>
        <begin position="47"/>
        <end position="57"/>
    </location>
</feature>
<feature type="transmembrane region" description="Helical; Name=2" evidence="3">
    <location>
        <begin position="58"/>
        <end position="80"/>
    </location>
</feature>
<feature type="topological domain" description="Extracellular" evidence="3">
    <location>
        <begin position="81"/>
        <end position="96"/>
    </location>
</feature>
<feature type="transmembrane region" description="Helical; Name=3" evidence="3">
    <location>
        <begin position="97"/>
        <end position="118"/>
    </location>
</feature>
<feature type="topological domain" description="Cytoplasmic" evidence="3">
    <location>
        <begin position="119"/>
        <end position="139"/>
    </location>
</feature>
<feature type="transmembrane region" description="Helical; Name=4" evidence="3">
    <location>
        <begin position="140"/>
        <end position="160"/>
    </location>
</feature>
<feature type="topological domain" description="Extracellular" evidence="3">
    <location>
        <begin position="161"/>
        <end position="340"/>
    </location>
</feature>
<feature type="transmembrane region" description="Helical; Name=5" evidence="3">
    <location>
        <begin position="341"/>
        <end position="360"/>
    </location>
</feature>
<feature type="topological domain" description="Cytoplasmic" evidence="3">
    <location>
        <begin position="361"/>
        <end position="377"/>
    </location>
</feature>
<feature type="transmembrane region" description="Helical; Name=6" evidence="3">
    <location>
        <begin position="378"/>
        <end position="400"/>
    </location>
</feature>
<feature type="topological domain" description="Extracellular" evidence="3">
    <location>
        <begin position="401"/>
        <end position="417"/>
    </location>
</feature>
<feature type="transmembrane region" description="Helical; Name=7" evidence="3">
    <location>
        <begin position="418"/>
        <end position="438"/>
    </location>
</feature>
<feature type="topological domain" description="Cytoplasmic" evidence="3">
    <location>
        <begin position="439"/>
        <end position="482"/>
    </location>
</feature>
<feature type="modified residue" description="Sulfotyrosine" evidence="1">
    <location>
        <position position="174"/>
    </location>
</feature>
<feature type="modified residue" description="Sulfotyrosine" evidence="1">
    <location>
        <position position="184"/>
    </location>
</feature>
<feature type="modified residue" description="Sulfotyrosine" evidence="1">
    <location>
        <position position="318"/>
    </location>
</feature>
<feature type="modified residue" description="Phosphoserine" evidence="2">
    <location>
        <position position="459"/>
    </location>
</feature>
<feature type="modified residue" description="Phosphothreonine" evidence="2">
    <location>
        <position position="463"/>
    </location>
</feature>
<feature type="glycosylation site" description="N-linked (GlcNAc...) asparagine" evidence="3">
    <location>
        <position position="9"/>
    </location>
</feature>
<feature type="glycosylation site" description="N-linked (GlcNAc...) asparagine" evidence="3">
    <location>
        <position position="194"/>
    </location>
</feature>
<feature type="disulfide bond" evidence="4">
    <location>
        <begin position="95"/>
        <end position="172"/>
    </location>
</feature>
<gene>
    <name type="primary">C3AR1</name>
</gene>
<keyword id="KW-1003">Cell membrane</keyword>
<keyword id="KW-0145">Chemotaxis</keyword>
<keyword id="KW-1015">Disulfide bond</keyword>
<keyword id="KW-0297">G-protein coupled receptor</keyword>
<keyword id="KW-0325">Glycoprotein</keyword>
<keyword id="KW-0472">Membrane</keyword>
<keyword id="KW-0597">Phosphoprotein</keyword>
<keyword id="KW-0675">Receptor</keyword>
<keyword id="KW-1185">Reference proteome</keyword>
<keyword id="KW-0765">Sulfation</keyword>
<keyword id="KW-0807">Transducer</keyword>
<keyword id="KW-0812">Transmembrane</keyword>
<keyword id="KW-1133">Transmembrane helix</keyword>
<sequence>MASFSAETNSTDLLSQPWNEPPVILSMVILSLTFLLGLPGNGLVLWVAGLKMQRTVNTVWFLHLTLADLLCCLSLPFSLAHLALQGQWPYGRFLCELIPSIIVLNMFASVFLLTAISLDRCLVVFKPIWCQNHRNVGTACSICGCIWVVAFVMCIPVFVYREIFTADNHNRCGYKFGLSSSLDYPDFYGDPLENRSLENIVQLPGEMNDRLDPSSFQTNDHPWTVPTVFQPQTFQRPSADSLHRDSARLTSQNLYSNVFKPADVVSPKIPSGFPIKDQETSPLDNSDAFLSTHLKLFPSASSNSFYESELPQDFQDYYNLGQFEDDNQVPTPLVAITITRLVVGFLLPSVIMIACYSFIVFRMQRGRFAKSQSKTFRVAVVVVAVFLVCWTPYHIFGVLSLLIDPESPLGKTLMSWDHVSIALASANSCFNPFLYALLGKDFRKKARQSIQGILEAAFSEELTRSTHCNSNNVFSERNSTTV</sequence>
<dbReference type="EMBL" id="CR857543">
    <property type="protein sequence ID" value="CAH89822.1"/>
    <property type="molecule type" value="mRNA"/>
</dbReference>
<dbReference type="RefSeq" id="NP_001124844.1">
    <property type="nucleotide sequence ID" value="NM_001131372.1"/>
</dbReference>
<dbReference type="SMR" id="Q5REI5"/>
<dbReference type="FunCoup" id="Q5REI5">
    <property type="interactions" value="521"/>
</dbReference>
<dbReference type="STRING" id="9601.ENSPPYP00000004833"/>
<dbReference type="GlyCosmos" id="Q5REI5">
    <property type="glycosylation" value="2 sites, No reported glycans"/>
</dbReference>
<dbReference type="GeneID" id="100171704"/>
<dbReference type="KEGG" id="pon:100171704"/>
<dbReference type="CTD" id="719"/>
<dbReference type="eggNOG" id="ENOG502R35Z">
    <property type="taxonomic scope" value="Eukaryota"/>
</dbReference>
<dbReference type="InParanoid" id="Q5REI5"/>
<dbReference type="OrthoDB" id="10037617at2759"/>
<dbReference type="Proteomes" id="UP000001595">
    <property type="component" value="Unplaced"/>
</dbReference>
<dbReference type="GO" id="GO:0005886">
    <property type="term" value="C:plasma membrane"/>
    <property type="evidence" value="ECO:0007669"/>
    <property type="project" value="UniProtKB-SubCell"/>
</dbReference>
<dbReference type="GO" id="GO:0004876">
    <property type="term" value="F:complement component C3a receptor activity"/>
    <property type="evidence" value="ECO:0007669"/>
    <property type="project" value="InterPro"/>
</dbReference>
<dbReference type="GO" id="GO:0004878">
    <property type="term" value="F:complement component C5a receptor activity"/>
    <property type="evidence" value="ECO:0007669"/>
    <property type="project" value="TreeGrafter"/>
</dbReference>
<dbReference type="GO" id="GO:0004930">
    <property type="term" value="F:G protein-coupled receptor activity"/>
    <property type="evidence" value="ECO:0007669"/>
    <property type="project" value="UniProtKB-KW"/>
</dbReference>
<dbReference type="GO" id="GO:0006935">
    <property type="term" value="P:chemotaxis"/>
    <property type="evidence" value="ECO:0007669"/>
    <property type="project" value="UniProtKB-KW"/>
</dbReference>
<dbReference type="GO" id="GO:0006954">
    <property type="term" value="P:inflammatory response"/>
    <property type="evidence" value="ECO:0007669"/>
    <property type="project" value="TreeGrafter"/>
</dbReference>
<dbReference type="GO" id="GO:0007200">
    <property type="term" value="P:phospholipase C-activating G protein-coupled receptor signaling pathway"/>
    <property type="evidence" value="ECO:0007669"/>
    <property type="project" value="TreeGrafter"/>
</dbReference>
<dbReference type="GO" id="GO:0007204">
    <property type="term" value="P:positive regulation of cytosolic calcium ion concentration"/>
    <property type="evidence" value="ECO:0007669"/>
    <property type="project" value="TreeGrafter"/>
</dbReference>
<dbReference type="FunFam" id="1.20.1070.10:FF:000269">
    <property type="entry name" value="C3a anaphylatoxin chemotactic receptor"/>
    <property type="match status" value="1"/>
</dbReference>
<dbReference type="FunFam" id="1.20.1070.10:FF:000284">
    <property type="entry name" value="C3a anaphylatoxin chemotactic receptor"/>
    <property type="match status" value="1"/>
</dbReference>
<dbReference type="Gene3D" id="1.20.1070.10">
    <property type="entry name" value="Rhodopsin 7-helix transmembrane proteins"/>
    <property type="match status" value="2"/>
</dbReference>
<dbReference type="InterPro" id="IPR001644">
    <property type="entry name" value="Anaphtx_C3AR1"/>
</dbReference>
<dbReference type="InterPro" id="IPR002234">
    <property type="entry name" value="Anphylx_rcpt_C3a/C5a1-2"/>
</dbReference>
<dbReference type="InterPro" id="IPR000826">
    <property type="entry name" value="Formyl_rcpt-rel"/>
</dbReference>
<dbReference type="InterPro" id="IPR000276">
    <property type="entry name" value="GPCR_Rhodpsn"/>
</dbReference>
<dbReference type="InterPro" id="IPR017452">
    <property type="entry name" value="GPCR_Rhodpsn_7TM"/>
</dbReference>
<dbReference type="PANTHER" id="PTHR24225:SF28">
    <property type="entry name" value="C3A ANAPHYLATOXIN CHEMOTACTIC RECEPTOR"/>
    <property type="match status" value="1"/>
</dbReference>
<dbReference type="PANTHER" id="PTHR24225">
    <property type="entry name" value="CHEMOTACTIC RECEPTOR"/>
    <property type="match status" value="1"/>
</dbReference>
<dbReference type="Pfam" id="PF00001">
    <property type="entry name" value="7tm_1"/>
    <property type="match status" value="2"/>
</dbReference>
<dbReference type="PRINTS" id="PR01104">
    <property type="entry name" value="ANPHYLATOXNR"/>
</dbReference>
<dbReference type="PRINTS" id="PR01060">
    <property type="entry name" value="C3ANPHYLTXNR"/>
</dbReference>
<dbReference type="PRINTS" id="PR00237">
    <property type="entry name" value="GPCRRHODOPSN"/>
</dbReference>
<dbReference type="SUPFAM" id="SSF81321">
    <property type="entry name" value="Family A G protein-coupled receptor-like"/>
    <property type="match status" value="1"/>
</dbReference>
<dbReference type="PROSITE" id="PS00237">
    <property type="entry name" value="G_PROTEIN_RECEP_F1_1"/>
    <property type="match status" value="1"/>
</dbReference>
<dbReference type="PROSITE" id="PS50262">
    <property type="entry name" value="G_PROTEIN_RECEP_F1_2"/>
    <property type="match status" value="1"/>
</dbReference>